<gene>
    <name evidence="1" type="primary">ribH</name>
    <name type="ordered locus">syc1854_d</name>
</gene>
<name>RISB_SYNP6</name>
<reference key="1">
    <citation type="journal article" date="2007" name="Photosyn. Res.">
        <title>Complete nucleotide sequence of the freshwater unicellular cyanobacterium Synechococcus elongatus PCC 6301 chromosome: gene content and organization.</title>
        <authorList>
            <person name="Sugita C."/>
            <person name="Ogata K."/>
            <person name="Shikata M."/>
            <person name="Jikuya H."/>
            <person name="Takano J."/>
            <person name="Furumichi M."/>
            <person name="Kanehisa M."/>
            <person name="Omata T."/>
            <person name="Sugiura M."/>
            <person name="Sugita M."/>
        </authorList>
    </citation>
    <scope>NUCLEOTIDE SEQUENCE [LARGE SCALE GENOMIC DNA]</scope>
    <source>
        <strain>ATCC 27144 / PCC 6301 / SAUG 1402/1</strain>
    </source>
</reference>
<organism>
    <name type="scientific">Synechococcus sp. (strain ATCC 27144 / PCC 6301 / SAUG 1402/1)</name>
    <name type="common">Anacystis nidulans</name>
    <dbReference type="NCBI Taxonomy" id="269084"/>
    <lineage>
        <taxon>Bacteria</taxon>
        <taxon>Bacillati</taxon>
        <taxon>Cyanobacteriota</taxon>
        <taxon>Cyanophyceae</taxon>
        <taxon>Synechococcales</taxon>
        <taxon>Synechococcaceae</taxon>
        <taxon>Synechococcus</taxon>
    </lineage>
</organism>
<comment type="function">
    <text evidence="1">Catalyzes the formation of 6,7-dimethyl-8-ribityllumazine by condensation of 5-amino-6-(D-ribitylamino)uracil with 3,4-dihydroxy-2-butanone 4-phosphate. This is the penultimate step in the biosynthesis of riboflavin.</text>
</comment>
<comment type="catalytic activity">
    <reaction evidence="1">
        <text>(2S)-2-hydroxy-3-oxobutyl phosphate + 5-amino-6-(D-ribitylamino)uracil = 6,7-dimethyl-8-(1-D-ribityl)lumazine + phosphate + 2 H2O + H(+)</text>
        <dbReference type="Rhea" id="RHEA:26152"/>
        <dbReference type="ChEBI" id="CHEBI:15377"/>
        <dbReference type="ChEBI" id="CHEBI:15378"/>
        <dbReference type="ChEBI" id="CHEBI:15934"/>
        <dbReference type="ChEBI" id="CHEBI:43474"/>
        <dbReference type="ChEBI" id="CHEBI:58201"/>
        <dbReference type="ChEBI" id="CHEBI:58830"/>
        <dbReference type="EC" id="2.5.1.78"/>
    </reaction>
</comment>
<comment type="pathway">
    <text evidence="1">Cofactor biosynthesis; riboflavin biosynthesis; riboflavin from 2-hydroxy-3-oxobutyl phosphate and 5-amino-6-(D-ribitylamino)uracil: step 1/2.</text>
</comment>
<comment type="similarity">
    <text evidence="1">Belongs to the DMRL synthase family.</text>
</comment>
<accession>Q5N0X6</accession>
<sequence>MAVFEGSFVNASQFRLAVVIGRFNDLVCEKLLAGCQDCLKRHGVDPDPQGTQVDYAWVPGSFEIPLVARQLALTGRYDAIICLGAVIRGQTPHFDYVASEVAKGVAATSLQTGIPIAFGVLTVDNLQQALERAGIKSNLGWNYALSALEMASLMHQIRSTTGEVPRQTLPLAAAPSNFAGT</sequence>
<proteinExistence type="inferred from homology"/>
<keyword id="KW-0686">Riboflavin biosynthesis</keyword>
<keyword id="KW-0808">Transferase</keyword>
<evidence type="ECO:0000255" key="1">
    <source>
        <dbReference type="HAMAP-Rule" id="MF_00178"/>
    </source>
</evidence>
<protein>
    <recommendedName>
        <fullName evidence="1">6,7-dimethyl-8-ribityllumazine synthase</fullName>
        <shortName evidence="1">DMRL synthase</shortName>
        <shortName evidence="1">LS</shortName>
        <shortName evidence="1">Lumazine synthase</shortName>
        <ecNumber evidence="1">2.5.1.78</ecNumber>
    </recommendedName>
</protein>
<feature type="chain" id="PRO_1000040531" description="6,7-dimethyl-8-ribityllumazine synthase">
    <location>
        <begin position="1"/>
        <end position="181"/>
    </location>
</feature>
<feature type="active site" description="Proton donor" evidence="1">
    <location>
        <position position="93"/>
    </location>
</feature>
<feature type="binding site" evidence="1">
    <location>
        <position position="23"/>
    </location>
    <ligand>
        <name>5-amino-6-(D-ribitylamino)uracil</name>
        <dbReference type="ChEBI" id="CHEBI:15934"/>
    </ligand>
</feature>
<feature type="binding site" evidence="1">
    <location>
        <begin position="61"/>
        <end position="63"/>
    </location>
    <ligand>
        <name>5-amino-6-(D-ribitylamino)uracil</name>
        <dbReference type="ChEBI" id="CHEBI:15934"/>
    </ligand>
</feature>
<feature type="binding site" evidence="1">
    <location>
        <begin position="85"/>
        <end position="87"/>
    </location>
    <ligand>
        <name>5-amino-6-(D-ribitylamino)uracil</name>
        <dbReference type="ChEBI" id="CHEBI:15934"/>
    </ligand>
</feature>
<feature type="binding site" evidence="1">
    <location>
        <begin position="90"/>
        <end position="91"/>
    </location>
    <ligand>
        <name>(2S)-2-hydroxy-3-oxobutyl phosphate</name>
        <dbReference type="ChEBI" id="CHEBI:58830"/>
    </ligand>
</feature>
<feature type="binding site" evidence="1">
    <location>
        <position position="118"/>
    </location>
    <ligand>
        <name>5-amino-6-(D-ribitylamino)uracil</name>
        <dbReference type="ChEBI" id="CHEBI:15934"/>
    </ligand>
</feature>
<feature type="binding site" evidence="1">
    <location>
        <position position="132"/>
    </location>
    <ligand>
        <name>(2S)-2-hydroxy-3-oxobutyl phosphate</name>
        <dbReference type="ChEBI" id="CHEBI:58830"/>
    </ligand>
</feature>
<dbReference type="EC" id="2.5.1.78" evidence="1"/>
<dbReference type="EMBL" id="AP008231">
    <property type="protein sequence ID" value="BAD80044.1"/>
    <property type="molecule type" value="Genomic_DNA"/>
</dbReference>
<dbReference type="RefSeq" id="WP_011244164.1">
    <property type="nucleotide sequence ID" value="NZ_CP085785.1"/>
</dbReference>
<dbReference type="SMR" id="Q5N0X6"/>
<dbReference type="GeneID" id="72431126"/>
<dbReference type="KEGG" id="syc:syc1854_d"/>
<dbReference type="eggNOG" id="COG0054">
    <property type="taxonomic scope" value="Bacteria"/>
</dbReference>
<dbReference type="UniPathway" id="UPA00275">
    <property type="reaction ID" value="UER00404"/>
</dbReference>
<dbReference type="Proteomes" id="UP000001175">
    <property type="component" value="Chromosome"/>
</dbReference>
<dbReference type="GO" id="GO:0005829">
    <property type="term" value="C:cytosol"/>
    <property type="evidence" value="ECO:0007669"/>
    <property type="project" value="TreeGrafter"/>
</dbReference>
<dbReference type="GO" id="GO:0009349">
    <property type="term" value="C:riboflavin synthase complex"/>
    <property type="evidence" value="ECO:0007669"/>
    <property type="project" value="InterPro"/>
</dbReference>
<dbReference type="GO" id="GO:0000906">
    <property type="term" value="F:6,7-dimethyl-8-ribityllumazine synthase activity"/>
    <property type="evidence" value="ECO:0007669"/>
    <property type="project" value="UniProtKB-UniRule"/>
</dbReference>
<dbReference type="GO" id="GO:0009231">
    <property type="term" value="P:riboflavin biosynthetic process"/>
    <property type="evidence" value="ECO:0007669"/>
    <property type="project" value="UniProtKB-UniRule"/>
</dbReference>
<dbReference type="CDD" id="cd09209">
    <property type="entry name" value="Lumazine_synthase-I"/>
    <property type="match status" value="1"/>
</dbReference>
<dbReference type="FunFam" id="3.40.50.960:FF:000001">
    <property type="entry name" value="6,7-dimethyl-8-ribityllumazine synthase"/>
    <property type="match status" value="1"/>
</dbReference>
<dbReference type="Gene3D" id="3.40.50.960">
    <property type="entry name" value="Lumazine/riboflavin synthase"/>
    <property type="match status" value="1"/>
</dbReference>
<dbReference type="HAMAP" id="MF_00178">
    <property type="entry name" value="Lumazine_synth"/>
    <property type="match status" value="1"/>
</dbReference>
<dbReference type="InterPro" id="IPR034964">
    <property type="entry name" value="LS"/>
</dbReference>
<dbReference type="InterPro" id="IPR002180">
    <property type="entry name" value="LS/RS"/>
</dbReference>
<dbReference type="InterPro" id="IPR036467">
    <property type="entry name" value="LS/RS_sf"/>
</dbReference>
<dbReference type="NCBIfam" id="TIGR00114">
    <property type="entry name" value="lumazine-synth"/>
    <property type="match status" value="1"/>
</dbReference>
<dbReference type="PANTHER" id="PTHR21058:SF0">
    <property type="entry name" value="6,7-DIMETHYL-8-RIBITYLLUMAZINE SYNTHASE"/>
    <property type="match status" value="1"/>
</dbReference>
<dbReference type="PANTHER" id="PTHR21058">
    <property type="entry name" value="6,7-DIMETHYL-8-RIBITYLLUMAZINE SYNTHASE DMRL SYNTHASE LUMAZINE SYNTHASE"/>
    <property type="match status" value="1"/>
</dbReference>
<dbReference type="Pfam" id="PF00885">
    <property type="entry name" value="DMRL_synthase"/>
    <property type="match status" value="1"/>
</dbReference>
<dbReference type="SUPFAM" id="SSF52121">
    <property type="entry name" value="Lumazine synthase"/>
    <property type="match status" value="1"/>
</dbReference>